<reference key="1">
    <citation type="submission" date="2004-07" db="EMBL/GenBank/DDBJ databases">
        <authorList>
            <consortium name="NIH - Xenopus Gene Collection (XGC) project"/>
        </authorList>
    </citation>
    <scope>NUCLEOTIDE SEQUENCE [LARGE SCALE MRNA]</scope>
</reference>
<name>CUTA_XENLA</name>
<sequence>MHPAFSSLRFWTLLLPGCAFLFYMTPLLLRTVGIRAFTMASDSYVSGSLSAAYVTCPNDTVAKDIARGLVERKLAACVNVIPQITSIYEWKGKLEEDTEVLLMIKTRSSKVSALTEYVRSVHPYEVCEVISLPIEQGNPPYLKWVGDIVPE</sequence>
<evidence type="ECO:0000250" key="1"/>
<evidence type="ECO:0000255" key="2"/>
<evidence type="ECO:0000305" key="3"/>
<comment type="subunit">
    <text evidence="1">Homotrimer.</text>
</comment>
<comment type="similarity">
    <text evidence="3">Belongs to the CutA family.</text>
</comment>
<comment type="sequence caution" evidence="3">
    <conflict type="erroneous initiation">
        <sequence resource="EMBL-CDS" id="AAH78516"/>
    </conflict>
</comment>
<feature type="signal peptide" evidence="2">
    <location>
        <begin position="1"/>
        <end position="36"/>
    </location>
</feature>
<feature type="chain" id="PRO_0000006383" description="Protein CutA homolog">
    <location>
        <begin position="37"/>
        <end position="151"/>
    </location>
</feature>
<keyword id="KW-1185">Reference proteome</keyword>
<keyword id="KW-0732">Signal</keyword>
<organism>
    <name type="scientific">Xenopus laevis</name>
    <name type="common">African clawed frog</name>
    <dbReference type="NCBI Taxonomy" id="8355"/>
    <lineage>
        <taxon>Eukaryota</taxon>
        <taxon>Metazoa</taxon>
        <taxon>Chordata</taxon>
        <taxon>Craniata</taxon>
        <taxon>Vertebrata</taxon>
        <taxon>Euteleostomi</taxon>
        <taxon>Amphibia</taxon>
        <taxon>Batrachia</taxon>
        <taxon>Anura</taxon>
        <taxon>Pipoidea</taxon>
        <taxon>Pipidae</taxon>
        <taxon>Xenopodinae</taxon>
        <taxon>Xenopus</taxon>
        <taxon>Xenopus</taxon>
    </lineage>
</organism>
<dbReference type="EMBL" id="BC078516">
    <property type="protein sequence ID" value="AAH78516.1"/>
    <property type="status" value="ALT_INIT"/>
    <property type="molecule type" value="mRNA"/>
</dbReference>
<dbReference type="RefSeq" id="NP_001087290.1">
    <property type="nucleotide sequence ID" value="NM_001093821.1"/>
</dbReference>
<dbReference type="RefSeq" id="XP_018084511.1">
    <property type="nucleotide sequence ID" value="XM_018229022.1"/>
</dbReference>
<dbReference type="SMR" id="Q66KY3"/>
<dbReference type="DNASU" id="447112"/>
<dbReference type="GeneID" id="447112"/>
<dbReference type="KEGG" id="xla:447112"/>
<dbReference type="AGR" id="Xenbase:XB-GENE-866007"/>
<dbReference type="CTD" id="447112"/>
<dbReference type="Xenbase" id="XB-GENE-866007">
    <property type="gene designation" value="cuta.L"/>
</dbReference>
<dbReference type="OMA" id="VYTTFPD"/>
<dbReference type="OrthoDB" id="2017693at2759"/>
<dbReference type="Proteomes" id="UP000186698">
    <property type="component" value="Chromosome 8L"/>
</dbReference>
<dbReference type="Bgee" id="447112">
    <property type="expression patterns" value="Expressed in internal ear and 19 other cell types or tissues"/>
</dbReference>
<dbReference type="GO" id="GO:0005507">
    <property type="term" value="F:copper ion binding"/>
    <property type="evidence" value="ECO:0000318"/>
    <property type="project" value="GO_Central"/>
</dbReference>
<dbReference type="GO" id="GO:0010038">
    <property type="term" value="P:response to metal ion"/>
    <property type="evidence" value="ECO:0007669"/>
    <property type="project" value="InterPro"/>
</dbReference>
<dbReference type="FunFam" id="3.30.70.120:FF:000005">
    <property type="entry name" value="CUTA isoform 1"/>
    <property type="match status" value="1"/>
</dbReference>
<dbReference type="Gene3D" id="3.30.70.120">
    <property type="match status" value="1"/>
</dbReference>
<dbReference type="InterPro" id="IPR004323">
    <property type="entry name" value="Ion_tolerance_CutA"/>
</dbReference>
<dbReference type="InterPro" id="IPR011322">
    <property type="entry name" value="N-reg_PII-like_a/b"/>
</dbReference>
<dbReference type="InterPro" id="IPR015867">
    <property type="entry name" value="N-reg_PII/ATP_PRibTrfase_C"/>
</dbReference>
<dbReference type="PANTHER" id="PTHR23419">
    <property type="entry name" value="DIVALENT CATION TOLERANCE CUTA-RELATED"/>
    <property type="match status" value="1"/>
</dbReference>
<dbReference type="PANTHER" id="PTHR23419:SF1">
    <property type="entry name" value="PROTEIN CUTA"/>
    <property type="match status" value="1"/>
</dbReference>
<dbReference type="Pfam" id="PF03091">
    <property type="entry name" value="CutA1"/>
    <property type="match status" value="1"/>
</dbReference>
<dbReference type="SUPFAM" id="SSF54913">
    <property type="entry name" value="GlnB-like"/>
    <property type="match status" value="1"/>
</dbReference>
<protein>
    <recommendedName>
        <fullName>Protein CutA homolog</fullName>
    </recommendedName>
</protein>
<proteinExistence type="evidence at transcript level"/>
<accession>Q66KY3</accession>
<gene>
    <name type="primary">cuta</name>
</gene>